<organismHost>
    <name type="scientific">Aves</name>
    <dbReference type="NCBI Taxonomy" id="8782"/>
</organismHost>
<organismHost>
    <name type="scientific">Cetacea</name>
    <name type="common">whales</name>
    <dbReference type="NCBI Taxonomy" id="9721"/>
</organismHost>
<organismHost>
    <name type="scientific">Homo sapiens</name>
    <name type="common">Human</name>
    <dbReference type="NCBI Taxonomy" id="9606"/>
</organismHost>
<organismHost>
    <name type="scientific">Phocidae</name>
    <name type="common">true seals</name>
    <dbReference type="NCBI Taxonomy" id="9709"/>
</organismHost>
<organismHost>
    <name type="scientific">Sus scrofa</name>
    <name type="common">Pig</name>
    <dbReference type="NCBI Taxonomy" id="9823"/>
</organismHost>
<protein>
    <recommendedName>
        <fullName evidence="1">Nuclear export protein</fullName>
        <shortName evidence="1">NEP</shortName>
    </recommendedName>
    <alternativeName>
        <fullName evidence="1">Non-structural protein 2</fullName>
        <shortName evidence="1">NS2</shortName>
    </alternativeName>
</protein>
<name>NEP_I78A8</name>
<feature type="chain" id="PRO_0000324217" description="Nuclear export protein">
    <location>
        <begin position="1"/>
        <end position="121"/>
    </location>
</feature>
<feature type="short sequence motif" description="Nuclear export signal" evidence="1">
    <location>
        <begin position="12"/>
        <end position="21"/>
    </location>
</feature>
<feature type="short sequence motif" description="Nuclear export signal" evidence="1">
    <location>
        <begin position="85"/>
        <end position="94"/>
    </location>
</feature>
<sequence length="121" mass="14365">MDSNTVSSFQDILLRMSKMQLGSSSEDLNGMITQFESLKLYRDSLGEAVMRMGDLHLLQNRNGKWREQLGQKFEEIRWLIEEVRHRLKTTENSFEQITFMQALQLLFEVEQEIRTFSFQLI</sequence>
<proteinExistence type="inferred from homology"/>
<keyword id="KW-0025">Alternative splicing</keyword>
<keyword id="KW-1048">Host nucleus</keyword>
<keyword id="KW-0945">Host-virus interaction</keyword>
<keyword id="KW-0813">Transport</keyword>
<keyword id="KW-0946">Virion</keyword>
<organism>
    <name type="scientific">Influenza A virus (strain A/Memphis/18/1978 H3N2)</name>
    <dbReference type="NCBI Taxonomy" id="383579"/>
    <lineage>
        <taxon>Viruses</taxon>
        <taxon>Riboviria</taxon>
        <taxon>Orthornavirae</taxon>
        <taxon>Negarnaviricota</taxon>
        <taxon>Polyploviricotina</taxon>
        <taxon>Insthoviricetes</taxon>
        <taxon>Articulavirales</taxon>
        <taxon>Orthomyxoviridae</taxon>
        <taxon>Alphainfluenzavirus</taxon>
        <taxon>Alphainfluenzavirus influenzae</taxon>
        <taxon>Influenza A virus</taxon>
    </lineage>
</organism>
<dbReference type="EMBL" id="CY006711">
    <property type="protein sequence ID" value="ABB96347.1"/>
    <property type="molecule type" value="Genomic_RNA"/>
</dbReference>
<dbReference type="SMR" id="Q2VNC8"/>
<dbReference type="Proteomes" id="UP000008574">
    <property type="component" value="Genome"/>
</dbReference>
<dbReference type="GO" id="GO:0042025">
    <property type="term" value="C:host cell nucleus"/>
    <property type="evidence" value="ECO:0007669"/>
    <property type="project" value="UniProtKB-SubCell"/>
</dbReference>
<dbReference type="GO" id="GO:0044423">
    <property type="term" value="C:virion component"/>
    <property type="evidence" value="ECO:0007669"/>
    <property type="project" value="UniProtKB-UniRule"/>
</dbReference>
<dbReference type="GO" id="GO:0039675">
    <property type="term" value="P:exit of virus from host cell nucleus through nuclear pore"/>
    <property type="evidence" value="ECO:0007669"/>
    <property type="project" value="UniProtKB-UniRule"/>
</dbReference>
<dbReference type="Gene3D" id="1.10.287.230">
    <property type="match status" value="1"/>
</dbReference>
<dbReference type="Gene3D" id="1.10.287.10">
    <property type="entry name" value="S15/NS1, RNA-binding"/>
    <property type="match status" value="1"/>
</dbReference>
<dbReference type="HAMAP" id="MF_04067">
    <property type="entry name" value="INFV_NEP"/>
    <property type="match status" value="1"/>
</dbReference>
<dbReference type="InterPro" id="IPR000968">
    <property type="entry name" value="Flu_NS2"/>
</dbReference>
<dbReference type="Pfam" id="PF00601">
    <property type="entry name" value="Flu_NS2"/>
    <property type="match status" value="1"/>
</dbReference>
<dbReference type="SUPFAM" id="SSF101156">
    <property type="entry name" value="Nonstructural protein ns2, Nep, M1-binding domain"/>
    <property type="match status" value="1"/>
</dbReference>
<accession>Q2VNC8</accession>
<comment type="function">
    <text evidence="1">Mediates the nuclear export of encapsidated genomic RNAs (ribonucleoproteins, RNPs). Acts as an adapter between viral RNPs complexes and the nuclear export machinery of the cell. Possesses no intrinsic RNA-binding activity, but includes a C-terminal M1-binding domain. This domain is believed to allow recognition of RNPs bound to the protein M1. Since protein M1 is not available in large quantities before late stages of infection, such an indirect recognition mechanism probably ensures that genomic RNPs are not exported from the host nucleus until sufficient quantities of viral mRNA and progeny genomic RNA have been synthesized. Furthermore, the RNPs enter the host cytoplasm only when associated with the M1 protein that is necessary to guide them to the plasma membrane. May down-regulate viral RNA synthesis when overproduced.</text>
</comment>
<comment type="subunit">
    <text evidence="1">Interacts with protein M1. May interact with host nucleoporin RAB/HRB and exportin XPO1/CRM1.</text>
</comment>
<comment type="subcellular location">
    <subcellularLocation>
        <location evidence="1">Virion</location>
    </subcellularLocation>
    <subcellularLocation>
        <location evidence="1">Host nucleus</location>
    </subcellularLocation>
</comment>
<comment type="alternative products">
    <event type="alternative splicing"/>
    <isoform>
        <id>Q2VNC8-1</id>
        <name>NEP</name>
        <name>NS2</name>
        <sequence type="displayed"/>
    </isoform>
    <isoform>
        <id>Q2VNC7-1</id>
        <name>NS1</name>
        <sequence type="external"/>
    </isoform>
</comment>
<comment type="similarity">
    <text evidence="1">Belongs to the influenza viruses NEP family.</text>
</comment>
<evidence type="ECO:0000255" key="1">
    <source>
        <dbReference type="HAMAP-Rule" id="MF_04067"/>
    </source>
</evidence>
<reference key="1">
    <citation type="submission" date="2005-12" db="EMBL/GenBank/DDBJ databases">
        <title>The NIAID influenza genome sequencing project.</title>
        <authorList>
            <person name="Ghedin E."/>
            <person name="Spiro D."/>
            <person name="Miller N."/>
            <person name="Zaborsky J."/>
            <person name="Feldblyum T."/>
            <person name="Subbu V."/>
            <person name="Shumway M."/>
            <person name="Sparenborg J."/>
            <person name="Groveman L."/>
            <person name="Halpin R."/>
            <person name="Sitz J."/>
            <person name="Koo H."/>
            <person name="Salzberg S.L."/>
            <person name="Webster R.G."/>
            <person name="Hoffmann E."/>
            <person name="Krauss S."/>
            <person name="Naeve C."/>
            <person name="Bao Y."/>
            <person name="Bolotov P."/>
            <person name="Dernovoy D."/>
            <person name="Kiryutin B."/>
            <person name="Lipman D.J."/>
            <person name="Tatusova T."/>
        </authorList>
    </citation>
    <scope>NUCLEOTIDE SEQUENCE [GENOMIC RNA]</scope>
</reference>
<gene>
    <name evidence="1" type="primary">NS</name>
</gene>